<gene>
    <name evidence="1" type="primary">ileS</name>
    <name type="ordered locus">BALH_1940</name>
</gene>
<protein>
    <recommendedName>
        <fullName evidence="1">Isoleucine--tRNA ligase</fullName>
        <ecNumber evidence="1">6.1.1.5</ecNumber>
    </recommendedName>
    <alternativeName>
        <fullName evidence="1">Isoleucyl-tRNA synthetase</fullName>
        <shortName evidence="1">IleRS</shortName>
    </alternativeName>
</protein>
<comment type="function">
    <text evidence="1">Catalyzes the attachment of isoleucine to tRNA(Ile). As IleRS can inadvertently accommodate and process structurally similar amino acids such as valine, to avoid such errors it has two additional distinct tRNA(Ile)-dependent editing activities. One activity is designated as 'pretransfer' editing and involves the hydrolysis of activated Val-AMP. The other activity is designated 'posttransfer' editing and involves deacylation of mischarged Val-tRNA(Ile).</text>
</comment>
<comment type="catalytic activity">
    <reaction evidence="1">
        <text>tRNA(Ile) + L-isoleucine + ATP = L-isoleucyl-tRNA(Ile) + AMP + diphosphate</text>
        <dbReference type="Rhea" id="RHEA:11060"/>
        <dbReference type="Rhea" id="RHEA-COMP:9666"/>
        <dbReference type="Rhea" id="RHEA-COMP:9695"/>
        <dbReference type="ChEBI" id="CHEBI:30616"/>
        <dbReference type="ChEBI" id="CHEBI:33019"/>
        <dbReference type="ChEBI" id="CHEBI:58045"/>
        <dbReference type="ChEBI" id="CHEBI:78442"/>
        <dbReference type="ChEBI" id="CHEBI:78528"/>
        <dbReference type="ChEBI" id="CHEBI:456215"/>
        <dbReference type="EC" id="6.1.1.5"/>
    </reaction>
</comment>
<comment type="cofactor">
    <cofactor evidence="1">
        <name>Zn(2+)</name>
        <dbReference type="ChEBI" id="CHEBI:29105"/>
    </cofactor>
</comment>
<comment type="subunit">
    <text evidence="1">Monomer.</text>
</comment>
<comment type="subcellular location">
    <subcellularLocation>
        <location evidence="1">Cytoplasm</location>
    </subcellularLocation>
</comment>
<comment type="domain">
    <text evidence="1">IleRS has two distinct active sites: one for aminoacylation and one for editing. The misactivated valine is translocated from the active site to the editing site, which sterically excludes the correctly activated isoleucine. The single editing site contains two valyl binding pockets, one specific for each substrate (Val-AMP or Val-tRNA(Ile)).</text>
</comment>
<comment type="similarity">
    <text evidence="1">Belongs to the class-I aminoacyl-tRNA synthetase family. IleS type 2 subfamily.</text>
</comment>
<name>SYI_BACAH</name>
<organism>
    <name type="scientific">Bacillus thuringiensis (strain Al Hakam)</name>
    <dbReference type="NCBI Taxonomy" id="412694"/>
    <lineage>
        <taxon>Bacteria</taxon>
        <taxon>Bacillati</taxon>
        <taxon>Bacillota</taxon>
        <taxon>Bacilli</taxon>
        <taxon>Bacillales</taxon>
        <taxon>Bacillaceae</taxon>
        <taxon>Bacillus</taxon>
        <taxon>Bacillus cereus group</taxon>
    </lineage>
</organism>
<reference key="1">
    <citation type="journal article" date="2007" name="J. Bacteriol.">
        <title>The complete genome sequence of Bacillus thuringiensis Al Hakam.</title>
        <authorList>
            <person name="Challacombe J.F."/>
            <person name="Altherr M.R."/>
            <person name="Xie G."/>
            <person name="Bhotika S.S."/>
            <person name="Brown N."/>
            <person name="Bruce D."/>
            <person name="Campbell C.S."/>
            <person name="Campbell M.L."/>
            <person name="Chen J."/>
            <person name="Chertkov O."/>
            <person name="Cleland C."/>
            <person name="Dimitrijevic M."/>
            <person name="Doggett N.A."/>
            <person name="Fawcett J.J."/>
            <person name="Glavina T."/>
            <person name="Goodwin L.A."/>
            <person name="Green L.D."/>
            <person name="Han C.S."/>
            <person name="Hill K.K."/>
            <person name="Hitchcock P."/>
            <person name="Jackson P.J."/>
            <person name="Keim P."/>
            <person name="Kewalramani A.R."/>
            <person name="Longmire J."/>
            <person name="Lucas S."/>
            <person name="Malfatti S."/>
            <person name="Martinez D."/>
            <person name="McMurry K."/>
            <person name="Meincke L.J."/>
            <person name="Misra M."/>
            <person name="Moseman B.L."/>
            <person name="Mundt M."/>
            <person name="Munk A.C."/>
            <person name="Okinaka R.T."/>
            <person name="Parson-Quintana B."/>
            <person name="Reilly L.P."/>
            <person name="Richardson P."/>
            <person name="Robinson D.L."/>
            <person name="Saunders E."/>
            <person name="Tapia R."/>
            <person name="Tesmer J.G."/>
            <person name="Thayer N."/>
            <person name="Thompson L.S."/>
            <person name="Tice H."/>
            <person name="Ticknor L.O."/>
            <person name="Wills P.L."/>
            <person name="Gilna P."/>
            <person name="Brettin T.S."/>
        </authorList>
    </citation>
    <scope>NUCLEOTIDE SEQUENCE [LARGE SCALE GENOMIC DNA]</scope>
    <source>
        <strain>Al Hakam</strain>
    </source>
</reference>
<feature type="chain" id="PRO_1000022147" description="Isoleucine--tRNA ligase">
    <location>
        <begin position="1"/>
        <end position="1033"/>
    </location>
</feature>
<feature type="short sequence motif" description="'HIGH' region">
    <location>
        <begin position="47"/>
        <end position="57"/>
    </location>
</feature>
<feature type="short sequence motif" description="'KMSKS' region">
    <location>
        <begin position="590"/>
        <end position="594"/>
    </location>
</feature>
<feature type="binding site" evidence="1">
    <location>
        <position position="593"/>
    </location>
    <ligand>
        <name>ATP</name>
        <dbReference type="ChEBI" id="CHEBI:30616"/>
    </ligand>
</feature>
<dbReference type="EC" id="6.1.1.5" evidence="1"/>
<dbReference type="EMBL" id="CP000485">
    <property type="protein sequence ID" value="ABK85256.1"/>
    <property type="molecule type" value="Genomic_DNA"/>
</dbReference>
<dbReference type="RefSeq" id="WP_000754935.1">
    <property type="nucleotide sequence ID" value="NC_008600.1"/>
</dbReference>
<dbReference type="SMR" id="A0RDG3"/>
<dbReference type="KEGG" id="btl:BALH_1940"/>
<dbReference type="HOGENOM" id="CLU_001493_1_1_9"/>
<dbReference type="GO" id="GO:0005737">
    <property type="term" value="C:cytoplasm"/>
    <property type="evidence" value="ECO:0007669"/>
    <property type="project" value="UniProtKB-SubCell"/>
</dbReference>
<dbReference type="GO" id="GO:0002161">
    <property type="term" value="F:aminoacyl-tRNA deacylase activity"/>
    <property type="evidence" value="ECO:0007669"/>
    <property type="project" value="InterPro"/>
</dbReference>
<dbReference type="GO" id="GO:0005524">
    <property type="term" value="F:ATP binding"/>
    <property type="evidence" value="ECO:0007669"/>
    <property type="project" value="UniProtKB-UniRule"/>
</dbReference>
<dbReference type="GO" id="GO:0004822">
    <property type="term" value="F:isoleucine-tRNA ligase activity"/>
    <property type="evidence" value="ECO:0007669"/>
    <property type="project" value="UniProtKB-UniRule"/>
</dbReference>
<dbReference type="GO" id="GO:0000049">
    <property type="term" value="F:tRNA binding"/>
    <property type="evidence" value="ECO:0007669"/>
    <property type="project" value="InterPro"/>
</dbReference>
<dbReference type="GO" id="GO:0008270">
    <property type="term" value="F:zinc ion binding"/>
    <property type="evidence" value="ECO:0007669"/>
    <property type="project" value="UniProtKB-UniRule"/>
</dbReference>
<dbReference type="GO" id="GO:0006428">
    <property type="term" value="P:isoleucyl-tRNA aminoacylation"/>
    <property type="evidence" value="ECO:0007669"/>
    <property type="project" value="UniProtKB-UniRule"/>
</dbReference>
<dbReference type="CDD" id="cd07961">
    <property type="entry name" value="Anticodon_Ia_Ile_ABEc"/>
    <property type="match status" value="1"/>
</dbReference>
<dbReference type="CDD" id="cd00818">
    <property type="entry name" value="IleRS_core"/>
    <property type="match status" value="1"/>
</dbReference>
<dbReference type="FunFam" id="1.10.730.10:FF:000038">
    <property type="entry name" value="Isoleucine--tRNA ligase"/>
    <property type="match status" value="1"/>
</dbReference>
<dbReference type="FunFam" id="3.40.50.620:FF:000063">
    <property type="entry name" value="Isoleucine--tRNA ligase"/>
    <property type="match status" value="1"/>
</dbReference>
<dbReference type="FunFam" id="3.40.50.620:FF:000075">
    <property type="entry name" value="Isoleucine--tRNA ligase"/>
    <property type="match status" value="1"/>
</dbReference>
<dbReference type="Gene3D" id="3.40.50.620">
    <property type="entry name" value="HUPs"/>
    <property type="match status" value="2"/>
</dbReference>
<dbReference type="Gene3D" id="1.10.730.10">
    <property type="entry name" value="Isoleucyl-tRNA Synthetase, Domain 1"/>
    <property type="match status" value="1"/>
</dbReference>
<dbReference type="HAMAP" id="MF_02003">
    <property type="entry name" value="Ile_tRNA_synth_type2"/>
    <property type="match status" value="1"/>
</dbReference>
<dbReference type="InterPro" id="IPR001412">
    <property type="entry name" value="aa-tRNA-synth_I_CS"/>
</dbReference>
<dbReference type="InterPro" id="IPR002300">
    <property type="entry name" value="aa-tRNA-synth_Ia"/>
</dbReference>
<dbReference type="InterPro" id="IPR033709">
    <property type="entry name" value="Anticodon_Ile_ABEc"/>
</dbReference>
<dbReference type="InterPro" id="IPR002301">
    <property type="entry name" value="Ile-tRNA-ligase"/>
</dbReference>
<dbReference type="InterPro" id="IPR023586">
    <property type="entry name" value="Ile-tRNA-ligase_type2"/>
</dbReference>
<dbReference type="InterPro" id="IPR013155">
    <property type="entry name" value="M/V/L/I-tRNA-synth_anticd-bd"/>
</dbReference>
<dbReference type="InterPro" id="IPR014729">
    <property type="entry name" value="Rossmann-like_a/b/a_fold"/>
</dbReference>
<dbReference type="InterPro" id="IPR009080">
    <property type="entry name" value="tRNAsynth_Ia_anticodon-bd"/>
</dbReference>
<dbReference type="InterPro" id="IPR009008">
    <property type="entry name" value="Val/Leu/Ile-tRNA-synth_edit"/>
</dbReference>
<dbReference type="NCBIfam" id="TIGR00392">
    <property type="entry name" value="ileS"/>
    <property type="match status" value="1"/>
</dbReference>
<dbReference type="PANTHER" id="PTHR42780:SF1">
    <property type="entry name" value="ISOLEUCINE--TRNA LIGASE, CYTOPLASMIC"/>
    <property type="match status" value="1"/>
</dbReference>
<dbReference type="PANTHER" id="PTHR42780">
    <property type="entry name" value="SOLEUCYL-TRNA SYNTHETASE"/>
    <property type="match status" value="1"/>
</dbReference>
<dbReference type="Pfam" id="PF08264">
    <property type="entry name" value="Anticodon_1"/>
    <property type="match status" value="1"/>
</dbReference>
<dbReference type="Pfam" id="PF19302">
    <property type="entry name" value="DUF5915"/>
    <property type="match status" value="1"/>
</dbReference>
<dbReference type="Pfam" id="PF00133">
    <property type="entry name" value="tRNA-synt_1"/>
    <property type="match status" value="1"/>
</dbReference>
<dbReference type="PRINTS" id="PR00984">
    <property type="entry name" value="TRNASYNTHILE"/>
</dbReference>
<dbReference type="SUPFAM" id="SSF47323">
    <property type="entry name" value="Anticodon-binding domain of a subclass of class I aminoacyl-tRNA synthetases"/>
    <property type="match status" value="2"/>
</dbReference>
<dbReference type="SUPFAM" id="SSF52374">
    <property type="entry name" value="Nucleotidylyl transferase"/>
    <property type="match status" value="1"/>
</dbReference>
<dbReference type="SUPFAM" id="SSF50677">
    <property type="entry name" value="ValRS/IleRS/LeuRS editing domain"/>
    <property type="match status" value="1"/>
</dbReference>
<dbReference type="PROSITE" id="PS00178">
    <property type="entry name" value="AA_TRNA_LIGASE_I"/>
    <property type="match status" value="1"/>
</dbReference>
<accession>A0RDG3</accession>
<proteinExistence type="inferred from homology"/>
<sequence>MKKVDVKESAVGRETRIRKQWNEQSIFEQSIQNREGAQSFVFYEGPPTANGLPHVGHALGRTIKDVVARYKTMVGYKVLRKAGWDTHGLPVELGVEKQLGISGKHEIEEYGIEPFIQKCKESVFTYEKQWREFTESIGYWVDMDDPYVTLENPYIESVWHILGTIHEKGLLYKGHRVSPYCPSCQTSLSSHEVAQGYKTVKDLSATVKFEVKDSENEYFLGWTTTPWTLPANVALAVHPNMEYVKAKQEGHVYIVAKERVQDVLKEDYEVLSVHKGEELVNTSYMPPFPMKEVTNGYHVIAADFVTADSGTGLVHIAPAYGEDDYRVVQSEGLSFLHVVDEKGEYTEAVPFLKGKFVKDCDVDIVRYLAKEGLLYHKEKYEHSYPHCWRCDSPLLYYAGESWLIRTTAIKDTFLQNNDSVTWYPDHMKHGRFGKFLENMVDWNISRNRYWGTPLNVWECESCDHQFAPKSIADLRKHSTKETPEDLELHKPYVDEVQVCCEKCGGTMTRTPEVIDVWFDSGSMPFAQYHYPFENKELFEEQFPADVIAEGIDQTRGWFYSLLAVSALYTGKAPYKRVLSLGHVLDEEGQKMSKSKGNALDPVDLVEKFGADALRWALLVDSAPWNAKRFSERTVLEAKSKFVDTLINVYSFYVLYANLDEYNPHETYDVKRTKLDEWVLSRLHSTTKKVRTALDDYQFTNAAREIAALVDEVSNWYVRRSRNRFWESGMNAEKAAAYETLHEVLVTISKLIAPFTPFVAEDIHVNLTGNSVHLEDYPVVNESLLQPKLEAEMNAVLQVVELGRSNRNQHSLKVKQPLAELVLLEHNENDMDWESYRDIVMDELNVKTFHVELDETKYTSYQLKLNFKKAGPKFGKNVNAVNGWLKQLSQAEVQNFVSTERAVYEVASGEEVVVTAEDVMVEKVAKSGFSNTTNGQYTVMLDTNVTEELLQEGVAREFIRAVQEYRKQLNLPVNLRVDVILDTEEELQQTLTNHKELLKENLLVKQFTFGHLTNEDDELSLGETKVRIKLSSAN</sequence>
<keyword id="KW-0030">Aminoacyl-tRNA synthetase</keyword>
<keyword id="KW-0067">ATP-binding</keyword>
<keyword id="KW-0963">Cytoplasm</keyword>
<keyword id="KW-0436">Ligase</keyword>
<keyword id="KW-0479">Metal-binding</keyword>
<keyword id="KW-0547">Nucleotide-binding</keyword>
<keyword id="KW-0648">Protein biosynthesis</keyword>
<keyword id="KW-0862">Zinc</keyword>
<evidence type="ECO:0000255" key="1">
    <source>
        <dbReference type="HAMAP-Rule" id="MF_02003"/>
    </source>
</evidence>